<gene>
    <name type="primary">ysxA</name>
    <name type="ordered locus">BSU28040</name>
</gene>
<sequence>MVIHDLPLKLKDFPMKEKPRERLLKVGAENLANHELLAILLRTGTKHESVLDLSNRLLRSFDGLRLLKEASVEELSSIPGIGMVKAIQILAAVELGSRIHKLANEEHFVIRSPEDGANLVMEDMRFLTQEHFVCLYLNTKNQVIHKRTVFIGSLNSSIVHPREVFKEAFKRSAASFICVHNHPSGDPTPSREDIEVTRRLFECGNLIGIELLDHLVIGDKKFVSLKEKGYL</sequence>
<proteinExistence type="evidence at transcript level"/>
<feature type="chain" id="PRO_0000190683" description="UPF0758 protein YsxA">
    <location>
        <begin position="1"/>
        <end position="231"/>
    </location>
</feature>
<feature type="domain" description="MPN" evidence="1">
    <location>
        <begin position="109"/>
        <end position="231"/>
    </location>
</feature>
<feature type="short sequence motif" description="JAMM motif" evidence="1">
    <location>
        <begin position="180"/>
        <end position="193"/>
    </location>
</feature>
<feature type="binding site" evidence="1">
    <location>
        <position position="180"/>
    </location>
    <ligand>
        <name>Zn(2+)</name>
        <dbReference type="ChEBI" id="CHEBI:29105"/>
        <note>catalytic</note>
    </ligand>
</feature>
<feature type="binding site" evidence="1">
    <location>
        <position position="182"/>
    </location>
    <ligand>
        <name>Zn(2+)</name>
        <dbReference type="ChEBI" id="CHEBI:29105"/>
        <note>catalytic</note>
    </ligand>
</feature>
<feature type="binding site" evidence="1">
    <location>
        <position position="193"/>
    </location>
    <ligand>
        <name>Zn(2+)</name>
        <dbReference type="ChEBI" id="CHEBI:29105"/>
        <note>catalytic</note>
    </ligand>
</feature>
<name>YSXA_BACSU</name>
<reference key="1">
    <citation type="journal article" date="1992" name="J. Bacteriol.">
        <title>Identification of Bacillus subtilis genes for septum placement and shape determination.</title>
        <authorList>
            <person name="Levin P.A."/>
            <person name="Margolis P.S."/>
            <person name="Setlow P."/>
            <person name="Losick R."/>
            <person name="Sun D."/>
        </authorList>
    </citation>
    <scope>NUCLEOTIDE SEQUENCE [GENOMIC DNA]</scope>
</reference>
<reference key="2">
    <citation type="journal article" date="1993" name="J. Bacteriol.">
        <title>Amplification of the Bacillus subtilis maf gene results in arrested septum formation.</title>
        <authorList>
            <person name="Butler Y.X."/>
            <person name="Abhayawardhane Y."/>
            <person name="Stewart G.C."/>
        </authorList>
    </citation>
    <scope>NUCLEOTIDE SEQUENCE [GENOMIC DNA]</scope>
    <source>
        <strain>168</strain>
    </source>
</reference>
<reference key="3">
    <citation type="journal article" date="1997" name="Nature">
        <title>The complete genome sequence of the Gram-positive bacterium Bacillus subtilis.</title>
        <authorList>
            <person name="Kunst F."/>
            <person name="Ogasawara N."/>
            <person name="Moszer I."/>
            <person name="Albertini A.M."/>
            <person name="Alloni G."/>
            <person name="Azevedo V."/>
            <person name="Bertero M.G."/>
            <person name="Bessieres P."/>
            <person name="Bolotin A."/>
            <person name="Borchert S."/>
            <person name="Borriss R."/>
            <person name="Boursier L."/>
            <person name="Brans A."/>
            <person name="Braun M."/>
            <person name="Brignell S.C."/>
            <person name="Bron S."/>
            <person name="Brouillet S."/>
            <person name="Bruschi C.V."/>
            <person name="Caldwell B."/>
            <person name="Capuano V."/>
            <person name="Carter N.M."/>
            <person name="Choi S.-K."/>
            <person name="Codani J.-J."/>
            <person name="Connerton I.F."/>
            <person name="Cummings N.J."/>
            <person name="Daniel R.A."/>
            <person name="Denizot F."/>
            <person name="Devine K.M."/>
            <person name="Duesterhoeft A."/>
            <person name="Ehrlich S.D."/>
            <person name="Emmerson P.T."/>
            <person name="Entian K.-D."/>
            <person name="Errington J."/>
            <person name="Fabret C."/>
            <person name="Ferrari E."/>
            <person name="Foulger D."/>
            <person name="Fritz C."/>
            <person name="Fujita M."/>
            <person name="Fujita Y."/>
            <person name="Fuma S."/>
            <person name="Galizzi A."/>
            <person name="Galleron N."/>
            <person name="Ghim S.-Y."/>
            <person name="Glaser P."/>
            <person name="Goffeau A."/>
            <person name="Golightly E.J."/>
            <person name="Grandi G."/>
            <person name="Guiseppi G."/>
            <person name="Guy B.J."/>
            <person name="Haga K."/>
            <person name="Haiech J."/>
            <person name="Harwood C.R."/>
            <person name="Henaut A."/>
            <person name="Hilbert H."/>
            <person name="Holsappel S."/>
            <person name="Hosono S."/>
            <person name="Hullo M.-F."/>
            <person name="Itaya M."/>
            <person name="Jones L.-M."/>
            <person name="Joris B."/>
            <person name="Karamata D."/>
            <person name="Kasahara Y."/>
            <person name="Klaerr-Blanchard M."/>
            <person name="Klein C."/>
            <person name="Kobayashi Y."/>
            <person name="Koetter P."/>
            <person name="Koningstein G."/>
            <person name="Krogh S."/>
            <person name="Kumano M."/>
            <person name="Kurita K."/>
            <person name="Lapidus A."/>
            <person name="Lardinois S."/>
            <person name="Lauber J."/>
            <person name="Lazarevic V."/>
            <person name="Lee S.-M."/>
            <person name="Levine A."/>
            <person name="Liu H."/>
            <person name="Masuda S."/>
            <person name="Mauel C."/>
            <person name="Medigue C."/>
            <person name="Medina N."/>
            <person name="Mellado R.P."/>
            <person name="Mizuno M."/>
            <person name="Moestl D."/>
            <person name="Nakai S."/>
            <person name="Noback M."/>
            <person name="Noone D."/>
            <person name="O'Reilly M."/>
            <person name="Ogawa K."/>
            <person name="Ogiwara A."/>
            <person name="Oudega B."/>
            <person name="Park S.-H."/>
            <person name="Parro V."/>
            <person name="Pohl T.M."/>
            <person name="Portetelle D."/>
            <person name="Porwollik S."/>
            <person name="Prescott A.M."/>
            <person name="Presecan E."/>
            <person name="Pujic P."/>
            <person name="Purnelle B."/>
            <person name="Rapoport G."/>
            <person name="Rey M."/>
            <person name="Reynolds S."/>
            <person name="Rieger M."/>
            <person name="Rivolta C."/>
            <person name="Rocha E."/>
            <person name="Roche B."/>
            <person name="Rose M."/>
            <person name="Sadaie Y."/>
            <person name="Sato T."/>
            <person name="Scanlan E."/>
            <person name="Schleich S."/>
            <person name="Schroeter R."/>
            <person name="Scoffone F."/>
            <person name="Sekiguchi J."/>
            <person name="Sekowska A."/>
            <person name="Seror S.J."/>
            <person name="Serror P."/>
            <person name="Shin B.-S."/>
            <person name="Soldo B."/>
            <person name="Sorokin A."/>
            <person name="Tacconi E."/>
            <person name="Takagi T."/>
            <person name="Takahashi H."/>
            <person name="Takemaru K."/>
            <person name="Takeuchi M."/>
            <person name="Tamakoshi A."/>
            <person name="Tanaka T."/>
            <person name="Terpstra P."/>
            <person name="Tognoni A."/>
            <person name="Tosato V."/>
            <person name="Uchiyama S."/>
            <person name="Vandenbol M."/>
            <person name="Vannier F."/>
            <person name="Vassarotti A."/>
            <person name="Viari A."/>
            <person name="Wambutt R."/>
            <person name="Wedler E."/>
            <person name="Wedler H."/>
            <person name="Weitzenegger T."/>
            <person name="Winters P."/>
            <person name="Wipat A."/>
            <person name="Yamamoto H."/>
            <person name="Yamane K."/>
            <person name="Yasumoto K."/>
            <person name="Yata K."/>
            <person name="Yoshida K."/>
            <person name="Yoshikawa H.-F."/>
            <person name="Zumstein E."/>
            <person name="Yoshikawa H."/>
            <person name="Danchin A."/>
        </authorList>
    </citation>
    <scope>NUCLEOTIDE SEQUENCE [LARGE SCALE GENOMIC DNA]</scope>
    <source>
        <strain>168</strain>
    </source>
</reference>
<reference key="4">
    <citation type="journal article" date="1992" name="J. Bacteriol.">
        <title>The divIVB region of the Bacillus subtilis chromosome encodes homologs of Escherichia coli septum placement (minCD) and cell shape (mreBCD) determinants.</title>
        <authorList>
            <person name="Varley A.W."/>
            <person name="Stewart G.C."/>
        </authorList>
    </citation>
    <scope>NUCLEOTIDE SEQUENCE [GENOMIC DNA] OF 155-231</scope>
</reference>
<reference key="5">
    <citation type="journal article" date="2007" name="J. Bacteriol.">
        <title>SigM-responsive genes of Bacillus subtilis and their promoters.</title>
        <authorList>
            <person name="Jervis A.J."/>
            <person name="Thackray P.D."/>
            <person name="Houston C.W."/>
            <person name="Horsburgh M.J."/>
            <person name="Moir A."/>
        </authorList>
    </citation>
    <scope>INDUCTION</scope>
    <source>
        <strain>168 / 1604</strain>
    </source>
</reference>
<evidence type="ECO:0000255" key="1">
    <source>
        <dbReference type="PROSITE-ProRule" id="PRU01182"/>
    </source>
</evidence>
<evidence type="ECO:0000269" key="2">
    <source>
    </source>
</evidence>
<evidence type="ECO:0000305" key="3"/>
<organism>
    <name type="scientific">Bacillus subtilis (strain 168)</name>
    <dbReference type="NCBI Taxonomy" id="224308"/>
    <lineage>
        <taxon>Bacteria</taxon>
        <taxon>Bacillati</taxon>
        <taxon>Bacillota</taxon>
        <taxon>Bacilli</taxon>
        <taxon>Bacillales</taxon>
        <taxon>Bacillaceae</taxon>
        <taxon>Bacillus</taxon>
    </lineage>
</organism>
<comment type="induction">
    <text evidence="2">Transcribed under partial control of SigM ECF sigma factor (PubMed:17434969).</text>
</comment>
<comment type="similarity">
    <text evidence="3">Belongs to the UPF0758 family.</text>
</comment>
<protein>
    <recommendedName>
        <fullName>UPF0758 protein YsxA</fullName>
    </recommendedName>
</protein>
<keyword id="KW-0378">Hydrolase</keyword>
<keyword id="KW-0479">Metal-binding</keyword>
<keyword id="KW-0482">Metalloprotease</keyword>
<keyword id="KW-0645">Protease</keyword>
<keyword id="KW-1185">Reference proteome</keyword>
<keyword id="KW-0862">Zinc</keyword>
<accession>Q02170</accession>
<dbReference type="EMBL" id="M96343">
    <property type="protein sequence ID" value="AAA22396.1"/>
    <property type="molecule type" value="Genomic_DNA"/>
</dbReference>
<dbReference type="EMBL" id="L08793">
    <property type="protein sequence ID" value="AAA22583.1"/>
    <property type="molecule type" value="Genomic_DNA"/>
</dbReference>
<dbReference type="EMBL" id="AL009126">
    <property type="protein sequence ID" value="CAB14764.1"/>
    <property type="molecule type" value="Genomic_DNA"/>
</dbReference>
<dbReference type="PIR" id="B45239">
    <property type="entry name" value="B45239"/>
</dbReference>
<dbReference type="RefSeq" id="NP_390682.1">
    <property type="nucleotide sequence ID" value="NC_000964.3"/>
</dbReference>
<dbReference type="SMR" id="Q02170"/>
<dbReference type="FunCoup" id="Q02170">
    <property type="interactions" value="261"/>
</dbReference>
<dbReference type="STRING" id="224308.BSU28040"/>
<dbReference type="PaxDb" id="224308-BSU28040"/>
<dbReference type="EnsemblBacteria" id="CAB14764">
    <property type="protein sequence ID" value="CAB14764"/>
    <property type="gene ID" value="BSU_28040"/>
</dbReference>
<dbReference type="GeneID" id="936544"/>
<dbReference type="KEGG" id="bsu:BSU28040"/>
<dbReference type="PATRIC" id="fig|224308.179.peg.3046"/>
<dbReference type="eggNOG" id="COG2003">
    <property type="taxonomic scope" value="Bacteria"/>
</dbReference>
<dbReference type="InParanoid" id="Q02170"/>
<dbReference type="OrthoDB" id="9804482at2"/>
<dbReference type="PhylomeDB" id="Q02170"/>
<dbReference type="BioCyc" id="BSUB:BSU28040-MONOMER"/>
<dbReference type="Proteomes" id="UP000001570">
    <property type="component" value="Chromosome"/>
</dbReference>
<dbReference type="GO" id="GO:0046872">
    <property type="term" value="F:metal ion binding"/>
    <property type="evidence" value="ECO:0007669"/>
    <property type="project" value="UniProtKB-KW"/>
</dbReference>
<dbReference type="GO" id="GO:0008237">
    <property type="term" value="F:metallopeptidase activity"/>
    <property type="evidence" value="ECO:0007669"/>
    <property type="project" value="UniProtKB-KW"/>
</dbReference>
<dbReference type="GO" id="GO:0006508">
    <property type="term" value="P:proteolysis"/>
    <property type="evidence" value="ECO:0007669"/>
    <property type="project" value="UniProtKB-KW"/>
</dbReference>
<dbReference type="CDD" id="cd08071">
    <property type="entry name" value="MPN_DUF2466"/>
    <property type="match status" value="1"/>
</dbReference>
<dbReference type="Gene3D" id="1.10.150.20">
    <property type="entry name" value="5' to 3' exonuclease, C-terminal subdomain"/>
    <property type="match status" value="1"/>
</dbReference>
<dbReference type="Gene3D" id="3.40.140.10">
    <property type="entry name" value="Cytidine Deaminase, domain 2"/>
    <property type="match status" value="1"/>
</dbReference>
<dbReference type="InterPro" id="IPR037518">
    <property type="entry name" value="MPN"/>
</dbReference>
<dbReference type="InterPro" id="IPR025657">
    <property type="entry name" value="RadC_JAB"/>
</dbReference>
<dbReference type="InterPro" id="IPR010994">
    <property type="entry name" value="RuvA_2-like"/>
</dbReference>
<dbReference type="InterPro" id="IPR001405">
    <property type="entry name" value="UPF0758"/>
</dbReference>
<dbReference type="InterPro" id="IPR020891">
    <property type="entry name" value="UPF0758_CS"/>
</dbReference>
<dbReference type="InterPro" id="IPR046778">
    <property type="entry name" value="UPF0758_N"/>
</dbReference>
<dbReference type="NCBIfam" id="NF000642">
    <property type="entry name" value="PRK00024.1"/>
    <property type="match status" value="1"/>
</dbReference>
<dbReference type="NCBIfam" id="TIGR00608">
    <property type="entry name" value="radc"/>
    <property type="match status" value="1"/>
</dbReference>
<dbReference type="PANTHER" id="PTHR30471">
    <property type="entry name" value="DNA REPAIR PROTEIN RADC"/>
    <property type="match status" value="1"/>
</dbReference>
<dbReference type="PANTHER" id="PTHR30471:SF3">
    <property type="entry name" value="UPF0758 PROTEIN YEES-RELATED"/>
    <property type="match status" value="1"/>
</dbReference>
<dbReference type="Pfam" id="PF04002">
    <property type="entry name" value="RadC"/>
    <property type="match status" value="1"/>
</dbReference>
<dbReference type="Pfam" id="PF20582">
    <property type="entry name" value="UPF0758_N"/>
    <property type="match status" value="1"/>
</dbReference>
<dbReference type="SUPFAM" id="SSF102712">
    <property type="entry name" value="JAB1/MPN domain"/>
    <property type="match status" value="1"/>
</dbReference>
<dbReference type="SUPFAM" id="SSF47781">
    <property type="entry name" value="RuvA domain 2-like"/>
    <property type="match status" value="1"/>
</dbReference>
<dbReference type="PROSITE" id="PS50249">
    <property type="entry name" value="MPN"/>
    <property type="match status" value="1"/>
</dbReference>
<dbReference type="PROSITE" id="PS01302">
    <property type="entry name" value="UPF0758"/>
    <property type="match status" value="1"/>
</dbReference>